<protein>
    <recommendedName>
        <fullName>Hydroxymethylglutaryl-CoA lyase, mitochondrial</fullName>
        <shortName>HL</shortName>
        <shortName>HMG-CoA lyase</shortName>
        <ecNumber evidence="2">4.1.3.4</ecNumber>
    </recommendedName>
    <alternativeName>
        <fullName>3-hydroxy-3-methylglutarate-CoA lyase</fullName>
    </alternativeName>
</protein>
<proteinExistence type="evidence at transcript level"/>
<accession>P97519</accession>
<reference key="1">
    <citation type="journal article" date="1998" name="Biochem. J.">
        <title>Molecular cloning of rat mitochondrial 3-hydroxy-3-methylglutaryl-CoA lyase and detection of the corresponding mRNA and of those encoding the remaining enzymes comprising the ketogenic 3-hydroxy-3-methylglutaryl-CoA cycle in central nervous system of suckling rat.</title>
        <authorList>
            <person name="Cullingford T.E."/>
            <person name="Dolphin C.T."/>
            <person name="Bhakoo K.K."/>
            <person name="Peuchen S."/>
            <person name="Canevari L."/>
            <person name="Clark J.B."/>
        </authorList>
    </citation>
    <scope>NUCLEOTIDE SEQUENCE [MRNA]</scope>
    <scope>TISSUE SPECIFICITY</scope>
    <source>
        <strain>Wistar</strain>
        <tissue>Liver</tissue>
    </source>
</reference>
<reference key="2">
    <citation type="journal article" date="2004" name="Genome Res.">
        <title>The status, quality, and expansion of the NIH full-length cDNA project: the Mammalian Gene Collection (MGC).</title>
        <authorList>
            <consortium name="The MGC Project Team"/>
        </authorList>
    </citation>
    <scope>NUCLEOTIDE SEQUENCE [LARGE SCALE MRNA]</scope>
    <source>
        <tissue>Prostate</tissue>
    </source>
</reference>
<sequence length="325" mass="34192">MATVRKAFPQRLVGLASLRAASTSSMGTLPKRVKIVEVGPRDGLQNEKSIVPTPVKIKLIDMLSEAGLPVIEATSFVSPKWVPQMADHSDVLKGIQKFPGINYPVLTPNMKGFEEAVAAGAKEVSIFGAASELFTRKNVNCSIEESFQRFDGVMQAARAASISVRGYVSCALGCPYEGKVSPAKVAEVAKKLYSMGCYEISLGDTIGVGTPGLMKDMLTAVLHEVPVAALAVHCHDTYGQALANTLVALQMGVSVVDSSVAGLGGCPYAKGASGNLATEDLVYMLTGLGIHTGVNLQKLLEAGDFICQALNRKTSSKVAQATCKL</sequence>
<name>HMGCL_RAT</name>
<comment type="function">
    <text evidence="2">Mitochondrial 3-hydroxy-3-methylglutaryl-CoA lyase that catalyzes a cation-dependent cleavage of (S)-3-hydroxy-3-methylglutaryl-CoA into acetyl-CoA and acetoacetate, a key step in ketogenesis. Terminal step in leucine catabolism. Ketone bodies (beta-hydroxybutyrate, acetoacetate and acetone) are essential as an alternative source of energy to glucose, as lipid precursors and as regulators of metabolism.</text>
</comment>
<comment type="catalytic activity">
    <reaction evidence="2">
        <text>(3S)-3-hydroxy-3-methylglutaryl-CoA = acetoacetate + acetyl-CoA</text>
        <dbReference type="Rhea" id="RHEA:24404"/>
        <dbReference type="ChEBI" id="CHEBI:13705"/>
        <dbReference type="ChEBI" id="CHEBI:43074"/>
        <dbReference type="ChEBI" id="CHEBI:57288"/>
        <dbReference type="EC" id="4.1.3.4"/>
    </reaction>
</comment>
<comment type="pathway">
    <text>Metabolic intermediate metabolism; (S)-3-hydroxy-3-methylglutaryl-CoA degradation; acetoacetate from (S)-3-hydroxy-3-methylglutaryl-CoA: step 1/1.</text>
</comment>
<comment type="subunit">
    <text evidence="2">Homodimer; disulfide-linked. Can also form homotetramers.</text>
</comment>
<comment type="subcellular location">
    <subcellularLocation>
        <location evidence="3">Mitochondrion matrix</location>
    </subcellularLocation>
    <subcellularLocation>
        <location evidence="3">Peroxisome</location>
    </subcellularLocation>
    <text evidence="3">Unprocessed form is peroxisomal.</text>
</comment>
<comment type="tissue specificity">
    <text evidence="7">In suckling rat, highest levels in liver and in intestine. Lower levels in heart, kidney and cerebellum. Weak expression in brain cortex, medulla and midbrain. Levels decrease slightly during weaning.</text>
</comment>
<comment type="similarity">
    <text evidence="8">Belongs to the HMG-CoA lyase family.</text>
</comment>
<evidence type="ECO:0000250" key="1"/>
<evidence type="ECO:0000250" key="2">
    <source>
        <dbReference type="UniProtKB" id="P35914"/>
    </source>
</evidence>
<evidence type="ECO:0000250" key="3">
    <source>
        <dbReference type="UniProtKB" id="P38060"/>
    </source>
</evidence>
<evidence type="ECO:0000255" key="4"/>
<evidence type="ECO:0000255" key="5">
    <source>
        <dbReference type="PROSITE-ProRule" id="PRU01151"/>
    </source>
</evidence>
<evidence type="ECO:0000255" key="6">
    <source>
        <dbReference type="PROSITE-ProRule" id="PRU10115"/>
    </source>
</evidence>
<evidence type="ECO:0000269" key="7">
    <source>
    </source>
</evidence>
<evidence type="ECO:0000305" key="8"/>
<keyword id="KW-0007">Acetylation</keyword>
<keyword id="KW-1015">Disulfide bond</keyword>
<keyword id="KW-0443">Lipid metabolism</keyword>
<keyword id="KW-0456">Lyase</keyword>
<keyword id="KW-0479">Metal-binding</keyword>
<keyword id="KW-0496">Mitochondrion</keyword>
<keyword id="KW-0576">Peroxisome</keyword>
<keyword id="KW-1185">Reference proteome</keyword>
<keyword id="KW-0809">Transit peptide</keyword>
<gene>
    <name type="primary">Hmgcl</name>
</gene>
<organism>
    <name type="scientific">Rattus norvegicus</name>
    <name type="common">Rat</name>
    <dbReference type="NCBI Taxonomy" id="10116"/>
    <lineage>
        <taxon>Eukaryota</taxon>
        <taxon>Metazoa</taxon>
        <taxon>Chordata</taxon>
        <taxon>Craniata</taxon>
        <taxon>Vertebrata</taxon>
        <taxon>Euteleostomi</taxon>
        <taxon>Mammalia</taxon>
        <taxon>Eutheria</taxon>
        <taxon>Euarchontoglires</taxon>
        <taxon>Glires</taxon>
        <taxon>Rodentia</taxon>
        <taxon>Myomorpha</taxon>
        <taxon>Muroidea</taxon>
        <taxon>Muridae</taxon>
        <taxon>Murinae</taxon>
        <taxon>Rattus</taxon>
    </lineage>
</organism>
<feature type="transit peptide" description="Mitochondrion" evidence="1">
    <location>
        <begin position="1"/>
        <end position="27"/>
    </location>
</feature>
<feature type="chain" id="PRO_0000013482" description="Hydroxymethylglutaryl-CoA lyase, mitochondrial">
    <location>
        <begin position="28"/>
        <end position="325"/>
    </location>
</feature>
<feature type="domain" description="Pyruvate carboxyltransferase" evidence="5">
    <location>
        <begin position="33"/>
        <end position="300"/>
    </location>
</feature>
<feature type="short sequence motif" description="Microbody targeting signal" evidence="4">
    <location>
        <begin position="323"/>
        <end position="325"/>
    </location>
</feature>
<feature type="active site" evidence="6">
    <location>
        <position position="266"/>
    </location>
</feature>
<feature type="binding site" evidence="1">
    <location>
        <position position="41"/>
    </location>
    <ligand>
        <name>substrate</name>
    </ligand>
</feature>
<feature type="binding site" evidence="1">
    <location>
        <position position="42"/>
    </location>
    <ligand>
        <name>a divalent metal cation</name>
        <dbReference type="ChEBI" id="CHEBI:60240"/>
    </ligand>
</feature>
<feature type="binding site" evidence="1">
    <location>
        <position position="233"/>
    </location>
    <ligand>
        <name>a divalent metal cation</name>
        <dbReference type="ChEBI" id="CHEBI:60240"/>
    </ligand>
</feature>
<feature type="binding site" evidence="1">
    <location>
        <position position="235"/>
    </location>
    <ligand>
        <name>a divalent metal cation</name>
        <dbReference type="ChEBI" id="CHEBI:60240"/>
    </ligand>
</feature>
<feature type="binding site" evidence="1">
    <location>
        <position position="275"/>
    </location>
    <ligand>
        <name>a divalent metal cation</name>
        <dbReference type="ChEBI" id="CHEBI:60240"/>
    </ligand>
</feature>
<feature type="modified residue" description="N6-acetyllysine; alternate" evidence="2">
    <location>
        <position position="48"/>
    </location>
</feature>
<feature type="modified residue" description="N6-succinyllysine; alternate" evidence="3">
    <location>
        <position position="48"/>
    </location>
</feature>
<feature type="modified residue" description="N6-acetyllysine" evidence="3">
    <location>
        <position position="111"/>
    </location>
</feature>
<feature type="modified residue" description="N6-acetyllysine; alternate" evidence="3">
    <location>
        <position position="137"/>
    </location>
</feature>
<feature type="modified residue" description="N6-succinyllysine; alternate" evidence="3">
    <location>
        <position position="137"/>
    </location>
</feature>
<feature type="modified residue" description="N6-acetyllysine; alternate" evidence="3">
    <location>
        <position position="179"/>
    </location>
</feature>
<feature type="modified residue" description="N6-succinyllysine; alternate" evidence="3">
    <location>
        <position position="179"/>
    </location>
</feature>
<feature type="modified residue" description="N6-acetyllysine" evidence="3">
    <location>
        <position position="324"/>
    </location>
</feature>
<feature type="disulfide bond" description="Interchain" evidence="1">
    <location>
        <position position="323"/>
    </location>
</feature>
<dbReference type="EC" id="4.1.3.4" evidence="2"/>
<dbReference type="EMBL" id="Y10054">
    <property type="protein sequence ID" value="CAA71148.1"/>
    <property type="molecule type" value="mRNA"/>
</dbReference>
<dbReference type="EMBL" id="BC061797">
    <property type="protein sequence ID" value="AAH61797.1"/>
    <property type="molecule type" value="mRNA"/>
</dbReference>
<dbReference type="RefSeq" id="NP_077362.1">
    <property type="nucleotide sequence ID" value="NM_024386.2"/>
</dbReference>
<dbReference type="SMR" id="P97519"/>
<dbReference type="FunCoup" id="P97519">
    <property type="interactions" value="1940"/>
</dbReference>
<dbReference type="IntAct" id="P97519">
    <property type="interactions" value="1"/>
</dbReference>
<dbReference type="STRING" id="10116.ENSRNOP00000012853"/>
<dbReference type="GlyGen" id="P97519">
    <property type="glycosylation" value="1 site"/>
</dbReference>
<dbReference type="iPTMnet" id="P97519"/>
<dbReference type="PhosphoSitePlus" id="P97519"/>
<dbReference type="jPOST" id="P97519"/>
<dbReference type="PaxDb" id="10116-ENSRNOP00000012853"/>
<dbReference type="GeneID" id="79238"/>
<dbReference type="KEGG" id="rno:79238"/>
<dbReference type="UCSC" id="RGD:620554">
    <property type="organism name" value="rat"/>
</dbReference>
<dbReference type="AGR" id="RGD:620554"/>
<dbReference type="CTD" id="3155"/>
<dbReference type="RGD" id="620554">
    <property type="gene designation" value="Hmgcl"/>
</dbReference>
<dbReference type="VEuPathDB" id="HostDB:ENSRNOG00000009422"/>
<dbReference type="eggNOG" id="KOG2368">
    <property type="taxonomic scope" value="Eukaryota"/>
</dbReference>
<dbReference type="HOGENOM" id="CLU_022138_3_2_1"/>
<dbReference type="InParanoid" id="P97519"/>
<dbReference type="OrthoDB" id="1905920at2759"/>
<dbReference type="PhylomeDB" id="P97519"/>
<dbReference type="TreeFam" id="TF105363"/>
<dbReference type="BRENDA" id="4.1.3.4">
    <property type="organism ID" value="5301"/>
</dbReference>
<dbReference type="Reactome" id="R-RNO-77111">
    <property type="pathway name" value="Synthesis of Ketone Bodies"/>
</dbReference>
<dbReference type="Reactome" id="R-RNO-9033241">
    <property type="pathway name" value="Peroxisomal protein import"/>
</dbReference>
<dbReference type="UniPathway" id="UPA00896">
    <property type="reaction ID" value="UER00863"/>
</dbReference>
<dbReference type="PRO" id="PR:P97519"/>
<dbReference type="Proteomes" id="UP000002494">
    <property type="component" value="Chromosome 5"/>
</dbReference>
<dbReference type="Bgee" id="ENSRNOG00000009422">
    <property type="expression patterns" value="Expressed in liver and 19 other cell types or tissues"/>
</dbReference>
<dbReference type="GO" id="GO:0005759">
    <property type="term" value="C:mitochondrial matrix"/>
    <property type="evidence" value="ECO:0007669"/>
    <property type="project" value="UniProtKB-SubCell"/>
</dbReference>
<dbReference type="GO" id="GO:0005739">
    <property type="term" value="C:mitochondrion"/>
    <property type="evidence" value="ECO:0000266"/>
    <property type="project" value="RGD"/>
</dbReference>
<dbReference type="GO" id="GO:0005777">
    <property type="term" value="C:peroxisome"/>
    <property type="evidence" value="ECO:0000266"/>
    <property type="project" value="RGD"/>
</dbReference>
<dbReference type="GO" id="GO:0032991">
    <property type="term" value="C:protein-containing complex"/>
    <property type="evidence" value="ECO:0000266"/>
    <property type="project" value="RGD"/>
</dbReference>
<dbReference type="GO" id="GO:0031406">
    <property type="term" value="F:carboxylic acid binding"/>
    <property type="evidence" value="ECO:0000353"/>
    <property type="project" value="RGD"/>
</dbReference>
<dbReference type="GO" id="GO:0000062">
    <property type="term" value="F:fatty-acyl-CoA binding"/>
    <property type="evidence" value="ECO:0000353"/>
    <property type="project" value="RGD"/>
</dbReference>
<dbReference type="GO" id="GO:0004419">
    <property type="term" value="F:hydroxymethylglutaryl-CoA lyase activity"/>
    <property type="evidence" value="ECO:0000314"/>
    <property type="project" value="RGD"/>
</dbReference>
<dbReference type="GO" id="GO:0000287">
    <property type="term" value="F:magnesium ion binding"/>
    <property type="evidence" value="ECO:0000266"/>
    <property type="project" value="RGD"/>
</dbReference>
<dbReference type="GO" id="GO:0030145">
    <property type="term" value="F:manganese ion binding"/>
    <property type="evidence" value="ECO:0000266"/>
    <property type="project" value="RGD"/>
</dbReference>
<dbReference type="GO" id="GO:0046872">
    <property type="term" value="F:metal ion binding"/>
    <property type="evidence" value="ECO:0000250"/>
    <property type="project" value="UniProtKB"/>
</dbReference>
<dbReference type="GO" id="GO:0005198">
    <property type="term" value="F:structural molecule activity"/>
    <property type="evidence" value="ECO:0000266"/>
    <property type="project" value="RGD"/>
</dbReference>
<dbReference type="GO" id="GO:0006637">
    <property type="term" value="P:acyl-CoA metabolic process"/>
    <property type="evidence" value="ECO:0000314"/>
    <property type="project" value="RGD"/>
</dbReference>
<dbReference type="GO" id="GO:0046951">
    <property type="term" value="P:ketone body biosynthetic process"/>
    <property type="evidence" value="ECO:0000314"/>
    <property type="project" value="RGD"/>
</dbReference>
<dbReference type="GO" id="GO:0006552">
    <property type="term" value="P:L-leucine catabolic process"/>
    <property type="evidence" value="ECO:0000318"/>
    <property type="project" value="GO_Central"/>
</dbReference>
<dbReference type="GO" id="GO:0006629">
    <property type="term" value="P:lipid metabolic process"/>
    <property type="evidence" value="ECO:0000266"/>
    <property type="project" value="RGD"/>
</dbReference>
<dbReference type="GO" id="GO:0001889">
    <property type="term" value="P:liver development"/>
    <property type="evidence" value="ECO:0000270"/>
    <property type="project" value="RGD"/>
</dbReference>
<dbReference type="GO" id="GO:0007005">
    <property type="term" value="P:mitochondrion organization"/>
    <property type="evidence" value="ECO:0000266"/>
    <property type="project" value="RGD"/>
</dbReference>
<dbReference type="GO" id="GO:0070542">
    <property type="term" value="P:response to fatty acid"/>
    <property type="evidence" value="ECO:0000270"/>
    <property type="project" value="RGD"/>
</dbReference>
<dbReference type="GO" id="GO:0007584">
    <property type="term" value="P:response to nutrient"/>
    <property type="evidence" value="ECO:0000270"/>
    <property type="project" value="RGD"/>
</dbReference>
<dbReference type="GO" id="GO:0042594">
    <property type="term" value="P:response to starvation"/>
    <property type="evidence" value="ECO:0000270"/>
    <property type="project" value="RGD"/>
</dbReference>
<dbReference type="CDD" id="cd07938">
    <property type="entry name" value="DRE_TIM_HMGL"/>
    <property type="match status" value="1"/>
</dbReference>
<dbReference type="FunFam" id="3.20.20.70:FF:000038">
    <property type="entry name" value="Hydroxymethylglutaryl-CoA lyase, mitochondrial"/>
    <property type="match status" value="1"/>
</dbReference>
<dbReference type="Gene3D" id="3.20.20.70">
    <property type="entry name" value="Aldolase class I"/>
    <property type="match status" value="1"/>
</dbReference>
<dbReference type="InterPro" id="IPR013785">
    <property type="entry name" value="Aldolase_TIM"/>
</dbReference>
<dbReference type="InterPro" id="IPR000138">
    <property type="entry name" value="HMG_CoA_lyase_AS"/>
</dbReference>
<dbReference type="InterPro" id="IPR043594">
    <property type="entry name" value="HMGL"/>
</dbReference>
<dbReference type="InterPro" id="IPR000891">
    <property type="entry name" value="PYR_CT"/>
</dbReference>
<dbReference type="NCBIfam" id="NF004283">
    <property type="entry name" value="PRK05692.1"/>
    <property type="match status" value="1"/>
</dbReference>
<dbReference type="PANTHER" id="PTHR42738">
    <property type="entry name" value="HYDROXYMETHYLGLUTARYL-COA LYASE"/>
    <property type="match status" value="1"/>
</dbReference>
<dbReference type="PANTHER" id="PTHR42738:SF1">
    <property type="entry name" value="HYDROXYMETHYLGLUTARYL-COA LYASE, MITOCHONDRIAL"/>
    <property type="match status" value="1"/>
</dbReference>
<dbReference type="Pfam" id="PF00682">
    <property type="entry name" value="HMGL-like"/>
    <property type="match status" value="1"/>
</dbReference>
<dbReference type="SUPFAM" id="SSF51569">
    <property type="entry name" value="Aldolase"/>
    <property type="match status" value="1"/>
</dbReference>
<dbReference type="PROSITE" id="PS01062">
    <property type="entry name" value="HMG_COA_LYASE"/>
    <property type="match status" value="1"/>
</dbReference>
<dbReference type="PROSITE" id="PS50991">
    <property type="entry name" value="PYR_CT"/>
    <property type="match status" value="1"/>
</dbReference>